<protein>
    <recommendedName>
        <fullName evidence="1">Putative 3-methyladenine DNA glycosylase</fullName>
        <ecNumber evidence="1">3.2.2.-</ecNumber>
    </recommendedName>
</protein>
<dbReference type="EC" id="3.2.2.-" evidence="1"/>
<dbReference type="EMBL" id="CP000050">
    <property type="protein sequence ID" value="AAY48863.1"/>
    <property type="molecule type" value="Genomic_DNA"/>
</dbReference>
<dbReference type="RefSeq" id="WP_011269652.1">
    <property type="nucleotide sequence ID" value="NC_007086.1"/>
</dbReference>
<dbReference type="SMR" id="Q4UVR0"/>
<dbReference type="KEGG" id="xcb:XC_1800"/>
<dbReference type="HOGENOM" id="CLU_060471_3_2_6"/>
<dbReference type="Proteomes" id="UP000000420">
    <property type="component" value="Chromosome"/>
</dbReference>
<dbReference type="GO" id="GO:0003905">
    <property type="term" value="F:alkylbase DNA N-glycosylase activity"/>
    <property type="evidence" value="ECO:0007669"/>
    <property type="project" value="InterPro"/>
</dbReference>
<dbReference type="GO" id="GO:0003677">
    <property type="term" value="F:DNA binding"/>
    <property type="evidence" value="ECO:0007669"/>
    <property type="project" value="InterPro"/>
</dbReference>
<dbReference type="GO" id="GO:0006284">
    <property type="term" value="P:base-excision repair"/>
    <property type="evidence" value="ECO:0007669"/>
    <property type="project" value="InterPro"/>
</dbReference>
<dbReference type="CDD" id="cd00540">
    <property type="entry name" value="AAG"/>
    <property type="match status" value="1"/>
</dbReference>
<dbReference type="FunFam" id="3.10.300.10:FF:000001">
    <property type="entry name" value="Putative 3-methyladenine DNA glycosylase"/>
    <property type="match status" value="1"/>
</dbReference>
<dbReference type="Gene3D" id="3.10.300.10">
    <property type="entry name" value="Methylpurine-DNA glycosylase (MPG)"/>
    <property type="match status" value="1"/>
</dbReference>
<dbReference type="HAMAP" id="MF_00527">
    <property type="entry name" value="3MGH"/>
    <property type="match status" value="1"/>
</dbReference>
<dbReference type="InterPro" id="IPR011034">
    <property type="entry name" value="Formyl_transferase-like_C_sf"/>
</dbReference>
<dbReference type="InterPro" id="IPR003180">
    <property type="entry name" value="MPG"/>
</dbReference>
<dbReference type="InterPro" id="IPR036995">
    <property type="entry name" value="MPG_sf"/>
</dbReference>
<dbReference type="NCBIfam" id="TIGR00567">
    <property type="entry name" value="3mg"/>
    <property type="match status" value="1"/>
</dbReference>
<dbReference type="NCBIfam" id="NF002003">
    <property type="entry name" value="PRK00802.1-3"/>
    <property type="match status" value="1"/>
</dbReference>
<dbReference type="PANTHER" id="PTHR10429">
    <property type="entry name" value="DNA-3-METHYLADENINE GLYCOSYLASE"/>
    <property type="match status" value="1"/>
</dbReference>
<dbReference type="PANTHER" id="PTHR10429:SF0">
    <property type="entry name" value="DNA-3-METHYLADENINE GLYCOSYLASE"/>
    <property type="match status" value="1"/>
</dbReference>
<dbReference type="Pfam" id="PF02245">
    <property type="entry name" value="Pur_DNA_glyco"/>
    <property type="match status" value="1"/>
</dbReference>
<dbReference type="SUPFAM" id="SSF50486">
    <property type="entry name" value="FMT C-terminal domain-like"/>
    <property type="match status" value="1"/>
</dbReference>
<keyword id="KW-0227">DNA damage</keyword>
<keyword id="KW-0234">DNA repair</keyword>
<keyword id="KW-0378">Hydrolase</keyword>
<comment type="similarity">
    <text evidence="1">Belongs to the DNA glycosylase MPG family.</text>
</comment>
<accession>Q4UVR0</accession>
<name>3MGH_XANC8</name>
<proteinExistence type="inferred from homology"/>
<reference key="1">
    <citation type="journal article" date="2005" name="Genome Res.">
        <title>Comparative and functional genomic analyses of the pathogenicity of phytopathogen Xanthomonas campestris pv. campestris.</title>
        <authorList>
            <person name="Qian W."/>
            <person name="Jia Y."/>
            <person name="Ren S.-X."/>
            <person name="He Y.-Q."/>
            <person name="Feng J.-X."/>
            <person name="Lu L.-F."/>
            <person name="Sun Q."/>
            <person name="Ying G."/>
            <person name="Tang D.-J."/>
            <person name="Tang H."/>
            <person name="Wu W."/>
            <person name="Hao P."/>
            <person name="Wang L."/>
            <person name="Jiang B.-L."/>
            <person name="Zeng S."/>
            <person name="Gu W.-Y."/>
            <person name="Lu G."/>
            <person name="Rong L."/>
            <person name="Tian Y."/>
            <person name="Yao Z."/>
            <person name="Fu G."/>
            <person name="Chen B."/>
            <person name="Fang R."/>
            <person name="Qiang B."/>
            <person name="Chen Z."/>
            <person name="Zhao G.-P."/>
            <person name="Tang J.-L."/>
            <person name="He C."/>
        </authorList>
    </citation>
    <scope>NUCLEOTIDE SEQUENCE [LARGE SCALE GENOMIC DNA]</scope>
    <source>
        <strain>8004</strain>
    </source>
</reference>
<organism>
    <name type="scientific">Xanthomonas campestris pv. campestris (strain 8004)</name>
    <dbReference type="NCBI Taxonomy" id="314565"/>
    <lineage>
        <taxon>Bacteria</taxon>
        <taxon>Pseudomonadati</taxon>
        <taxon>Pseudomonadota</taxon>
        <taxon>Gammaproteobacteria</taxon>
        <taxon>Lysobacterales</taxon>
        <taxon>Lysobacteraceae</taxon>
        <taxon>Xanthomonas</taxon>
    </lineage>
</organism>
<evidence type="ECO:0000255" key="1">
    <source>
        <dbReference type="HAMAP-Rule" id="MF_00527"/>
    </source>
</evidence>
<feature type="chain" id="PRO_0000265071" description="Putative 3-methyladenine DNA glycosylase">
    <location>
        <begin position="1"/>
        <end position="207"/>
    </location>
</feature>
<sequence>MSLHSPLPRAFYAADARTVAPLLLNKVLVSADGRRGRITEVEAYCGSEDAAAHSFRGMTPRTQVMFGAPGHLYVYFIYGMHWAINAVCGGAPGHAVLIRALEPLAGCDAMHAARGAAPFKSLTTGPGRLAQAFGVSAVDNGLDLTTGVARLWIEDDGTPSPAAPLAGPRIGIRKAVELPWRWVVPGSAYLSRPLPRVSGARASVTGD</sequence>
<gene>
    <name type="ordered locus">XC_1800</name>
</gene>